<evidence type="ECO:0000250" key="1">
    <source>
        <dbReference type="UniProtKB" id="P24758"/>
    </source>
</evidence>
<evidence type="ECO:0000256" key="2">
    <source>
        <dbReference type="SAM" id="MobiDB-lite"/>
    </source>
</evidence>
<evidence type="ECO:0000305" key="3"/>
<protein>
    <recommendedName>
        <fullName>Envelop protein OPG153</fullName>
    </recommendedName>
</protein>
<organism>
    <name type="scientific">Monkeypox virus</name>
    <dbReference type="NCBI Taxonomy" id="10244"/>
    <lineage>
        <taxon>Viruses</taxon>
        <taxon>Varidnaviria</taxon>
        <taxon>Bamfordvirae</taxon>
        <taxon>Nucleocytoviricota</taxon>
        <taxon>Pokkesviricetes</taxon>
        <taxon>Chitovirales</taxon>
        <taxon>Poxviridae</taxon>
        <taxon>Chordopoxvirinae</taxon>
        <taxon>Orthopoxvirus</taxon>
    </lineage>
</organism>
<organismHost>
    <name type="scientific">Cynomys gunnisoni</name>
    <name type="common">Gunnison's prairie dog</name>
    <name type="synonym">Spermophilus gunnisoni</name>
    <dbReference type="NCBI Taxonomy" id="45479"/>
</organismHost>
<organismHost>
    <name type="scientific">Cynomys leucurus</name>
    <name type="common">White-tailed prairie dog</name>
    <dbReference type="NCBI Taxonomy" id="99825"/>
</organismHost>
<organismHost>
    <name type="scientific">Cynomys ludovicianus</name>
    <name type="common">Black-tailed prairie dog</name>
    <dbReference type="NCBI Taxonomy" id="45480"/>
</organismHost>
<organismHost>
    <name type="scientific">Cynomys mexicanus</name>
    <name type="common">Mexican prairie dog</name>
    <dbReference type="NCBI Taxonomy" id="99826"/>
</organismHost>
<organismHost>
    <name type="scientific">Cynomys parvidens</name>
    <name type="common">Utah prairie dog</name>
    <dbReference type="NCBI Taxonomy" id="99827"/>
</organismHost>
<organismHost>
    <name type="scientific">Gliridae</name>
    <name type="common">dormice</name>
    <dbReference type="NCBI Taxonomy" id="30650"/>
</organismHost>
<organismHost>
    <name type="scientific">Heliosciurus ruwenzorii</name>
    <name type="common">Ruwenzori sun squirrel</name>
    <dbReference type="NCBI Taxonomy" id="226685"/>
</organismHost>
<organismHost>
    <name type="scientific">Homo sapiens</name>
    <name type="common">Human</name>
    <dbReference type="NCBI Taxonomy" id="9606"/>
</organismHost>
<organismHost>
    <name type="scientific">Mus musculus</name>
    <name type="common">Mouse</name>
    <dbReference type="NCBI Taxonomy" id="10090"/>
</organismHost>
<gene>
    <name type="primary">OPG153</name>
    <name type="ORF">MPXVgp138</name>
</gene>
<comment type="function">
    <text evidence="1">Envelop protein that mediates acid-dependent endocytosis into host cells. Plays an important role in endocytic entry of the virus by acting as an acid-sensitive membrane fusion suppressor. Low pH in host endosomes triggers conformational changes to allow de-repression of viral fusion complex activity and membrane fusion within vesicles. Also plays a role in bridging the mature virion with structural protein OPG152.</text>
</comment>
<comment type="subunit">
    <text evidence="1">Interacts with proteins OPG094 and OPG143. Interacts with OPG154. Interacts with OPG152. Interacts with host laminin.</text>
</comment>
<comment type="subcellular location">
    <subcellularLocation>
        <location evidence="1">Virion membrane</location>
    </subcellularLocation>
    <text evidence="1">OPG153 is anchored to the mature virion (MV) membrane through disulfide bonding with protein OPG154.</text>
</comment>
<comment type="similarity">
    <text evidence="3">Belongs to the orthopoxvirus OPG153 protein family.</text>
</comment>
<dbReference type="EMBL" id="MT903340">
    <property type="protein sequence ID" value="QNP13007.1"/>
    <property type="molecule type" value="Genomic_DNA"/>
</dbReference>
<dbReference type="RefSeq" id="YP_010377134.1">
    <property type="nucleotide sequence ID" value="NC_063383.1"/>
</dbReference>
<dbReference type="SMR" id="A0A7H0DNC4"/>
<dbReference type="GeneID" id="72551547"/>
<dbReference type="Proteomes" id="UP000516359">
    <property type="component" value="Genome"/>
</dbReference>
<dbReference type="GO" id="GO:0016020">
    <property type="term" value="C:membrane"/>
    <property type="evidence" value="ECO:0007669"/>
    <property type="project" value="UniProtKB-KW"/>
</dbReference>
<dbReference type="GO" id="GO:0019031">
    <property type="term" value="C:viral envelope"/>
    <property type="evidence" value="ECO:0007669"/>
    <property type="project" value="InterPro"/>
</dbReference>
<dbReference type="GO" id="GO:0055036">
    <property type="term" value="C:virion membrane"/>
    <property type="evidence" value="ECO:0007669"/>
    <property type="project" value="UniProtKB-SubCell"/>
</dbReference>
<dbReference type="GO" id="GO:0019064">
    <property type="term" value="P:fusion of virus membrane with host plasma membrane"/>
    <property type="evidence" value="ECO:0007669"/>
    <property type="project" value="InterPro"/>
</dbReference>
<dbReference type="InterPro" id="IPR003436">
    <property type="entry name" value="Chordopox_Fusion/A27"/>
</dbReference>
<dbReference type="InterPro" id="IPR009285">
    <property type="entry name" value="Poxvirus_A26L"/>
</dbReference>
<dbReference type="Pfam" id="PF06086">
    <property type="entry name" value="Pox_A30L_A26L"/>
    <property type="match status" value="1"/>
</dbReference>
<dbReference type="Pfam" id="PF02346">
    <property type="entry name" value="Vac_Fusion"/>
    <property type="match status" value="1"/>
</dbReference>
<accession>A0A7H0DNC4</accession>
<name>PG153_MONPV</name>
<reference key="1">
    <citation type="journal article" date="2022" name="J. Infect. Dis.">
        <title>Exportation of Monkeypox virus from the African continent.</title>
        <authorList>
            <person name="Mauldin M.R."/>
            <person name="McCollum A.M."/>
            <person name="Nakazawa Y.J."/>
            <person name="Mandra A."/>
            <person name="Whitehouse E.R."/>
            <person name="Davidson W."/>
            <person name="Zhao H."/>
            <person name="Gao J."/>
            <person name="Li Y."/>
            <person name="Doty J."/>
            <person name="Yinka-Ogunleye A."/>
            <person name="Akinpelu A."/>
            <person name="Aruna O."/>
            <person name="Naidoo D."/>
            <person name="Lewandowski K."/>
            <person name="Afrough B."/>
            <person name="Graham V."/>
            <person name="Aarons E."/>
            <person name="Hewson R."/>
            <person name="Vipond R."/>
            <person name="Dunning J."/>
            <person name="Chand M."/>
            <person name="Brown C."/>
            <person name="Cohen-Gihon I."/>
            <person name="Erez N."/>
            <person name="Shifman O."/>
            <person name="Israeli O."/>
            <person name="Sharon M."/>
            <person name="Schwartz E."/>
            <person name="Beth-Din A."/>
            <person name="Zvi A."/>
            <person name="Mak T.M."/>
            <person name="Ng Y.K."/>
            <person name="Cui L."/>
            <person name="Lin R.T.P."/>
            <person name="Olson V.A."/>
            <person name="Brooks T."/>
            <person name="Paran N."/>
            <person name="Ihekweazu C."/>
            <person name="Reynolds M.G."/>
        </authorList>
    </citation>
    <scope>NUCLEOTIDE SEQUENCE [LARGE SCALE GENOMIC DNA]</scope>
    <source>
        <strain>MPXV-M5312_HM12_Rivers</strain>
    </source>
</reference>
<feature type="chain" id="PRO_0000457539" description="Envelop protein OPG153">
    <location>
        <begin position="1"/>
        <end position="509"/>
    </location>
</feature>
<feature type="region of interest" description="Disordered" evidence="2">
    <location>
        <begin position="356"/>
        <end position="421"/>
    </location>
</feature>
<feature type="compositionally biased region" description="Acidic residues" evidence="2">
    <location>
        <begin position="366"/>
        <end position="385"/>
    </location>
</feature>
<feature type="compositionally biased region" description="Pro residues" evidence="2">
    <location>
        <begin position="389"/>
        <end position="401"/>
    </location>
</feature>
<feature type="disulfide bond" evidence="1">
    <location>
        <begin position="43"/>
        <end position="342"/>
    </location>
</feature>
<feature type="disulfide bond" description="Interchain (with C-71 in A27)" evidence="1">
    <location>
        <position position="450"/>
    </location>
</feature>
<feature type="disulfide bond" description="Interchain (with C-72 in A27)" evidence="1">
    <location>
        <position position="451"/>
    </location>
</feature>
<sequence length="509" mass="59179">MANIINLWNGIVPMVQDVNVASITAFKSMIDETWDKKIEANTCISRKHRNIIHEVIRDFMKAYPKMDENRKSPLGAPMQWLTQYYILKNEYHKTMLAYDDGSLNTKFKTLNIYMITNVGQYILYIVFCIISGKNHDGTPYIYDSEITSNDKNLINDRIKYACKQILHGQLTMALRIRNKFMFIGSPMYLWFNVNGSHVYHEIYDRNVGFHNKEIGRLLYAFMYYLSISGRFLNDLALLKFTYLGESWTFSLSVPEYILYGLGYSVFDTIEKFSNDAILVYIRTNNRNGYDYAEFNKKGIVKVTEDKPDNDKRIHAIRLINYSSDVQHIHFGFRNTLIIDNECTNIQSSAENATDIGHYQDSKINIEDDDIIDDDDDDDDDDDDDDYNPKPTPIPDPHPRPPFPRHDYHKRPKLLPVEEPDPVKKDADRIRLDNHILNTLDHNLNSIGHYCCDTVAVDRLEHHIETLGQYTVILARKINMQTLLFPWPLPTVHQHAIDGSIPPHGRSTIL</sequence>
<keyword id="KW-1015">Disulfide bond</keyword>
<keyword id="KW-0472">Membrane</keyword>
<keyword id="KW-0597">Phosphoprotein</keyword>
<keyword id="KW-1185">Reference proteome</keyword>
<keyword id="KW-0946">Virion</keyword>
<proteinExistence type="inferred from homology"/>